<accession>Q49ZQ7</accession>
<sequence length="553" mass="60649">MRKIEAKRGLDIECKGWEQEAVLRMLYNNLDPEVAERPEDLVVYGGIGKAARNWEAFEAIEDTLRSLEADETMLVQSGKPVAVFKTHEEAPRVLISNSVLVPEWANWDHFNELDKKGLMMYGQMTAGSWIYIGSQGIVQGTYETFGELANQHFNGKLNGTVTLTAGLGGMGGAQPLAVTMNGGVVIGVDVDETRIDKRIETRYCDVKTHDLDEALRLADEAREKGEPLSIGLVGNAVDTHKAILDKGFKIDIVTDQTSAHDPLNGYVPQGYSLEEAKAIRQKDPKQYVKEAQTSMRKHVELMLEFQKNGAVAFDYGNNIRQVAFNDGLENAFDFPGFVPAYIRPLFCEGKGPFRFAALSGNPKDIERADEEMRKIFPDNEKLIRWLDLAQEKIAFQGLPSRIAWLGYEERAKMGLALNKLVRDGEISAPIVIGRDHLDSGSVASPNRETEGMKDGSDAVGDWAILNALINTAAGGSWISFHHGGGVGMGYSLHAGMVVVADGSERADRRLGRVLTTDPGMGVVRHADAGYESAIKVAKEKGIKIPMITGKGDK</sequence>
<name>HUTU_STAS1</name>
<organism>
    <name type="scientific">Staphylococcus saprophyticus subsp. saprophyticus (strain ATCC 15305 / DSM 20229 / NCIMB 8711 / NCTC 7292 / S-41)</name>
    <dbReference type="NCBI Taxonomy" id="342451"/>
    <lineage>
        <taxon>Bacteria</taxon>
        <taxon>Bacillati</taxon>
        <taxon>Bacillota</taxon>
        <taxon>Bacilli</taxon>
        <taxon>Bacillales</taxon>
        <taxon>Staphylococcaceae</taxon>
        <taxon>Staphylococcus</taxon>
    </lineage>
</organism>
<reference key="1">
    <citation type="journal article" date="2005" name="Proc. Natl. Acad. Sci. U.S.A.">
        <title>Whole genome sequence of Staphylococcus saprophyticus reveals the pathogenesis of uncomplicated urinary tract infection.</title>
        <authorList>
            <person name="Kuroda M."/>
            <person name="Yamashita A."/>
            <person name="Hirakawa H."/>
            <person name="Kumano M."/>
            <person name="Morikawa K."/>
            <person name="Higashide M."/>
            <person name="Maruyama A."/>
            <person name="Inose Y."/>
            <person name="Matoba K."/>
            <person name="Toh H."/>
            <person name="Kuhara S."/>
            <person name="Hattori M."/>
            <person name="Ohta T."/>
        </authorList>
    </citation>
    <scope>NUCLEOTIDE SEQUENCE [LARGE SCALE GENOMIC DNA]</scope>
    <source>
        <strain>ATCC 15305 / DSM 20229 / NCIMB 8711 / NCTC 7292 / S-41</strain>
    </source>
</reference>
<comment type="function">
    <text evidence="1">Catalyzes the conversion of urocanate to 4-imidazolone-5-propionate.</text>
</comment>
<comment type="catalytic activity">
    <reaction evidence="1">
        <text>4-imidazolone-5-propanoate = trans-urocanate + H2O</text>
        <dbReference type="Rhea" id="RHEA:13101"/>
        <dbReference type="ChEBI" id="CHEBI:15377"/>
        <dbReference type="ChEBI" id="CHEBI:17771"/>
        <dbReference type="ChEBI" id="CHEBI:77893"/>
        <dbReference type="EC" id="4.2.1.49"/>
    </reaction>
</comment>
<comment type="cofactor">
    <cofactor evidence="1">
        <name>NAD(+)</name>
        <dbReference type="ChEBI" id="CHEBI:57540"/>
    </cofactor>
    <text evidence="1">Binds 1 NAD(+) per subunit.</text>
</comment>
<comment type="pathway">
    <text evidence="1">Amino-acid degradation; L-histidine degradation into L-glutamate; N-formimidoyl-L-glutamate from L-histidine: step 2/3.</text>
</comment>
<comment type="subcellular location">
    <subcellularLocation>
        <location evidence="1">Cytoplasm</location>
    </subcellularLocation>
</comment>
<comment type="similarity">
    <text evidence="1">Belongs to the urocanase family.</text>
</comment>
<keyword id="KW-0963">Cytoplasm</keyword>
<keyword id="KW-0369">Histidine metabolism</keyword>
<keyword id="KW-0456">Lyase</keyword>
<keyword id="KW-0520">NAD</keyword>
<keyword id="KW-1185">Reference proteome</keyword>
<proteinExistence type="inferred from homology"/>
<gene>
    <name evidence="1" type="primary">hutU</name>
    <name type="ordered locus">SSP0572</name>
</gene>
<evidence type="ECO:0000255" key="1">
    <source>
        <dbReference type="HAMAP-Rule" id="MF_00577"/>
    </source>
</evidence>
<protein>
    <recommendedName>
        <fullName evidence="1">Urocanate hydratase</fullName>
        <shortName evidence="1">Urocanase</shortName>
        <ecNumber evidence="1">4.2.1.49</ecNumber>
    </recommendedName>
    <alternativeName>
        <fullName evidence="1">Imidazolonepropionate hydrolase</fullName>
    </alternativeName>
</protein>
<feature type="chain" id="PRO_0000207359" description="Urocanate hydratase">
    <location>
        <begin position="1"/>
        <end position="553"/>
    </location>
</feature>
<feature type="binding site" evidence="1">
    <location>
        <begin position="45"/>
        <end position="46"/>
    </location>
    <ligand>
        <name>NAD(+)</name>
        <dbReference type="ChEBI" id="CHEBI:57540"/>
    </ligand>
</feature>
<feature type="binding site" evidence="1">
    <location>
        <position position="123"/>
    </location>
    <ligand>
        <name>NAD(+)</name>
        <dbReference type="ChEBI" id="CHEBI:57540"/>
    </ligand>
</feature>
<feature type="binding site" evidence="1">
    <location>
        <begin position="169"/>
        <end position="171"/>
    </location>
    <ligand>
        <name>NAD(+)</name>
        <dbReference type="ChEBI" id="CHEBI:57540"/>
    </ligand>
</feature>
<feature type="binding site" evidence="1">
    <location>
        <position position="189"/>
    </location>
    <ligand>
        <name>NAD(+)</name>
        <dbReference type="ChEBI" id="CHEBI:57540"/>
    </ligand>
</feature>
<feature type="binding site" evidence="1">
    <location>
        <position position="194"/>
    </location>
    <ligand>
        <name>NAD(+)</name>
        <dbReference type="ChEBI" id="CHEBI:57540"/>
    </ligand>
</feature>
<feature type="binding site" evidence="1">
    <location>
        <begin position="235"/>
        <end position="236"/>
    </location>
    <ligand>
        <name>NAD(+)</name>
        <dbReference type="ChEBI" id="CHEBI:57540"/>
    </ligand>
</feature>
<feature type="binding site" evidence="1">
    <location>
        <begin position="256"/>
        <end position="260"/>
    </location>
    <ligand>
        <name>NAD(+)</name>
        <dbReference type="ChEBI" id="CHEBI:57540"/>
    </ligand>
</feature>
<feature type="binding site" evidence="1">
    <location>
        <begin position="266"/>
        <end position="267"/>
    </location>
    <ligand>
        <name>NAD(+)</name>
        <dbReference type="ChEBI" id="CHEBI:57540"/>
    </ligand>
</feature>
<feature type="binding site" evidence="1">
    <location>
        <position position="315"/>
    </location>
    <ligand>
        <name>NAD(+)</name>
        <dbReference type="ChEBI" id="CHEBI:57540"/>
    </ligand>
</feature>
<feature type="binding site" evidence="1">
    <location>
        <position position="485"/>
    </location>
    <ligand>
        <name>NAD(+)</name>
        <dbReference type="ChEBI" id="CHEBI:57540"/>
    </ligand>
</feature>
<dbReference type="EC" id="4.2.1.49" evidence="1"/>
<dbReference type="EMBL" id="AP008934">
    <property type="protein sequence ID" value="BAE17717.1"/>
    <property type="molecule type" value="Genomic_DNA"/>
</dbReference>
<dbReference type="RefSeq" id="WP_011302520.1">
    <property type="nucleotide sequence ID" value="NZ_MTGA01000036.1"/>
</dbReference>
<dbReference type="SMR" id="Q49ZQ7"/>
<dbReference type="GeneID" id="3616865"/>
<dbReference type="KEGG" id="ssp:SSP0572"/>
<dbReference type="PATRIC" id="fig|342451.11.peg.578"/>
<dbReference type="eggNOG" id="COG2987">
    <property type="taxonomic scope" value="Bacteria"/>
</dbReference>
<dbReference type="HOGENOM" id="CLU_018868_0_1_9"/>
<dbReference type="OrthoDB" id="9764874at2"/>
<dbReference type="UniPathway" id="UPA00379">
    <property type="reaction ID" value="UER00550"/>
</dbReference>
<dbReference type="Proteomes" id="UP000006371">
    <property type="component" value="Chromosome"/>
</dbReference>
<dbReference type="GO" id="GO:0005737">
    <property type="term" value="C:cytoplasm"/>
    <property type="evidence" value="ECO:0007669"/>
    <property type="project" value="UniProtKB-SubCell"/>
</dbReference>
<dbReference type="GO" id="GO:0016153">
    <property type="term" value="F:urocanate hydratase activity"/>
    <property type="evidence" value="ECO:0007669"/>
    <property type="project" value="UniProtKB-UniRule"/>
</dbReference>
<dbReference type="GO" id="GO:0019556">
    <property type="term" value="P:L-histidine catabolic process to glutamate and formamide"/>
    <property type="evidence" value="ECO:0007669"/>
    <property type="project" value="UniProtKB-UniPathway"/>
</dbReference>
<dbReference type="GO" id="GO:0019557">
    <property type="term" value="P:L-histidine catabolic process to glutamate and formate"/>
    <property type="evidence" value="ECO:0007669"/>
    <property type="project" value="UniProtKB-UniPathway"/>
</dbReference>
<dbReference type="FunFam" id="3.40.50.10730:FF:000001">
    <property type="entry name" value="Urocanate hydratase"/>
    <property type="match status" value="1"/>
</dbReference>
<dbReference type="Gene3D" id="3.40.50.10730">
    <property type="entry name" value="Urocanase like domains"/>
    <property type="match status" value="1"/>
</dbReference>
<dbReference type="Gene3D" id="3.40.1770.10">
    <property type="entry name" value="Urocanase superfamily"/>
    <property type="match status" value="1"/>
</dbReference>
<dbReference type="HAMAP" id="MF_00577">
    <property type="entry name" value="HutU"/>
    <property type="match status" value="1"/>
</dbReference>
<dbReference type="InterPro" id="IPR055351">
    <property type="entry name" value="Urocanase"/>
</dbReference>
<dbReference type="InterPro" id="IPR023637">
    <property type="entry name" value="Urocanase-like"/>
</dbReference>
<dbReference type="InterPro" id="IPR035401">
    <property type="entry name" value="Urocanase_C"/>
</dbReference>
<dbReference type="InterPro" id="IPR038364">
    <property type="entry name" value="Urocanase_central_sf"/>
</dbReference>
<dbReference type="InterPro" id="IPR023636">
    <property type="entry name" value="Urocanase_CS"/>
</dbReference>
<dbReference type="InterPro" id="IPR035400">
    <property type="entry name" value="Urocanase_N"/>
</dbReference>
<dbReference type="InterPro" id="IPR035085">
    <property type="entry name" value="Urocanase_Rossmann-like"/>
</dbReference>
<dbReference type="InterPro" id="IPR036190">
    <property type="entry name" value="Urocanase_sf"/>
</dbReference>
<dbReference type="NCBIfam" id="TIGR01228">
    <property type="entry name" value="hutU"/>
    <property type="match status" value="1"/>
</dbReference>
<dbReference type="NCBIfam" id="NF003820">
    <property type="entry name" value="PRK05414.1"/>
    <property type="match status" value="1"/>
</dbReference>
<dbReference type="PANTHER" id="PTHR12216">
    <property type="entry name" value="UROCANATE HYDRATASE"/>
    <property type="match status" value="1"/>
</dbReference>
<dbReference type="PANTHER" id="PTHR12216:SF4">
    <property type="entry name" value="UROCANATE HYDRATASE"/>
    <property type="match status" value="1"/>
</dbReference>
<dbReference type="Pfam" id="PF01175">
    <property type="entry name" value="Urocanase"/>
    <property type="match status" value="1"/>
</dbReference>
<dbReference type="Pfam" id="PF17392">
    <property type="entry name" value="Urocanase_C"/>
    <property type="match status" value="1"/>
</dbReference>
<dbReference type="Pfam" id="PF17391">
    <property type="entry name" value="Urocanase_N"/>
    <property type="match status" value="1"/>
</dbReference>
<dbReference type="PIRSF" id="PIRSF001423">
    <property type="entry name" value="Urocanate_hydrat"/>
    <property type="match status" value="1"/>
</dbReference>
<dbReference type="SUPFAM" id="SSF111326">
    <property type="entry name" value="Urocanase"/>
    <property type="match status" value="1"/>
</dbReference>
<dbReference type="PROSITE" id="PS01233">
    <property type="entry name" value="UROCANASE"/>
    <property type="match status" value="1"/>
</dbReference>